<dbReference type="EC" id="3.6.5.n1" evidence="1"/>
<dbReference type="EMBL" id="AE017355">
    <property type="protein sequence ID" value="AAT63565.1"/>
    <property type="molecule type" value="Genomic_DNA"/>
</dbReference>
<dbReference type="RefSeq" id="WP_001030952.1">
    <property type="nucleotide sequence ID" value="NC_005957.1"/>
</dbReference>
<dbReference type="RefSeq" id="YP_038374.1">
    <property type="nucleotide sequence ID" value="NC_005957.1"/>
</dbReference>
<dbReference type="SMR" id="Q6HDK2"/>
<dbReference type="KEGG" id="btk:BT9727_4056"/>
<dbReference type="PATRIC" id="fig|281309.8.peg.4328"/>
<dbReference type="HOGENOM" id="CLU_009995_3_3_9"/>
<dbReference type="Proteomes" id="UP000001301">
    <property type="component" value="Chromosome"/>
</dbReference>
<dbReference type="GO" id="GO:0005886">
    <property type="term" value="C:plasma membrane"/>
    <property type="evidence" value="ECO:0007669"/>
    <property type="project" value="UniProtKB-SubCell"/>
</dbReference>
<dbReference type="GO" id="GO:0005525">
    <property type="term" value="F:GTP binding"/>
    <property type="evidence" value="ECO:0007669"/>
    <property type="project" value="UniProtKB-UniRule"/>
</dbReference>
<dbReference type="GO" id="GO:0003924">
    <property type="term" value="F:GTPase activity"/>
    <property type="evidence" value="ECO:0007669"/>
    <property type="project" value="UniProtKB-UniRule"/>
</dbReference>
<dbReference type="GO" id="GO:0043022">
    <property type="term" value="F:ribosome binding"/>
    <property type="evidence" value="ECO:0007669"/>
    <property type="project" value="UniProtKB-UniRule"/>
</dbReference>
<dbReference type="GO" id="GO:0003746">
    <property type="term" value="F:translation elongation factor activity"/>
    <property type="evidence" value="ECO:0007669"/>
    <property type="project" value="UniProtKB-UniRule"/>
</dbReference>
<dbReference type="GO" id="GO:0045727">
    <property type="term" value="P:positive regulation of translation"/>
    <property type="evidence" value="ECO:0007669"/>
    <property type="project" value="UniProtKB-UniRule"/>
</dbReference>
<dbReference type="CDD" id="cd03699">
    <property type="entry name" value="EF4_II"/>
    <property type="match status" value="1"/>
</dbReference>
<dbReference type="CDD" id="cd16260">
    <property type="entry name" value="EF4_III"/>
    <property type="match status" value="1"/>
</dbReference>
<dbReference type="CDD" id="cd01890">
    <property type="entry name" value="LepA"/>
    <property type="match status" value="1"/>
</dbReference>
<dbReference type="CDD" id="cd03709">
    <property type="entry name" value="lepA_C"/>
    <property type="match status" value="1"/>
</dbReference>
<dbReference type="FunFam" id="3.40.50.300:FF:000078">
    <property type="entry name" value="Elongation factor 4"/>
    <property type="match status" value="1"/>
</dbReference>
<dbReference type="FunFam" id="2.40.30.10:FF:000015">
    <property type="entry name" value="Translation factor GUF1, mitochondrial"/>
    <property type="match status" value="1"/>
</dbReference>
<dbReference type="FunFam" id="3.30.70.240:FF:000007">
    <property type="entry name" value="Translation factor GUF1, mitochondrial"/>
    <property type="match status" value="1"/>
</dbReference>
<dbReference type="FunFam" id="3.30.70.2570:FF:000001">
    <property type="entry name" value="Translation factor GUF1, mitochondrial"/>
    <property type="match status" value="1"/>
</dbReference>
<dbReference type="FunFam" id="3.30.70.870:FF:000004">
    <property type="entry name" value="Translation factor GUF1, mitochondrial"/>
    <property type="match status" value="1"/>
</dbReference>
<dbReference type="Gene3D" id="3.30.70.240">
    <property type="match status" value="1"/>
</dbReference>
<dbReference type="Gene3D" id="3.30.70.2570">
    <property type="entry name" value="Elongation factor 4, C-terminal domain"/>
    <property type="match status" value="1"/>
</dbReference>
<dbReference type="Gene3D" id="3.30.70.870">
    <property type="entry name" value="Elongation Factor G (Translational Gtpase), domain 3"/>
    <property type="match status" value="1"/>
</dbReference>
<dbReference type="Gene3D" id="3.40.50.300">
    <property type="entry name" value="P-loop containing nucleotide triphosphate hydrolases"/>
    <property type="match status" value="1"/>
</dbReference>
<dbReference type="Gene3D" id="2.40.30.10">
    <property type="entry name" value="Translation factors"/>
    <property type="match status" value="1"/>
</dbReference>
<dbReference type="HAMAP" id="MF_00071">
    <property type="entry name" value="LepA"/>
    <property type="match status" value="1"/>
</dbReference>
<dbReference type="InterPro" id="IPR006297">
    <property type="entry name" value="EF-4"/>
</dbReference>
<dbReference type="InterPro" id="IPR035647">
    <property type="entry name" value="EFG_III/V"/>
</dbReference>
<dbReference type="InterPro" id="IPR000640">
    <property type="entry name" value="EFG_V-like"/>
</dbReference>
<dbReference type="InterPro" id="IPR004161">
    <property type="entry name" value="EFTu-like_2"/>
</dbReference>
<dbReference type="InterPro" id="IPR031157">
    <property type="entry name" value="G_TR_CS"/>
</dbReference>
<dbReference type="InterPro" id="IPR038363">
    <property type="entry name" value="LepA_C_sf"/>
</dbReference>
<dbReference type="InterPro" id="IPR013842">
    <property type="entry name" value="LepA_CTD"/>
</dbReference>
<dbReference type="InterPro" id="IPR035654">
    <property type="entry name" value="LepA_IV"/>
</dbReference>
<dbReference type="InterPro" id="IPR027417">
    <property type="entry name" value="P-loop_NTPase"/>
</dbReference>
<dbReference type="InterPro" id="IPR005225">
    <property type="entry name" value="Small_GTP-bd"/>
</dbReference>
<dbReference type="InterPro" id="IPR000795">
    <property type="entry name" value="T_Tr_GTP-bd_dom"/>
</dbReference>
<dbReference type="NCBIfam" id="TIGR01393">
    <property type="entry name" value="lepA"/>
    <property type="match status" value="1"/>
</dbReference>
<dbReference type="NCBIfam" id="TIGR00231">
    <property type="entry name" value="small_GTP"/>
    <property type="match status" value="1"/>
</dbReference>
<dbReference type="PANTHER" id="PTHR43512:SF4">
    <property type="entry name" value="TRANSLATION FACTOR GUF1 HOMOLOG, CHLOROPLASTIC"/>
    <property type="match status" value="1"/>
</dbReference>
<dbReference type="PANTHER" id="PTHR43512">
    <property type="entry name" value="TRANSLATION FACTOR GUF1-RELATED"/>
    <property type="match status" value="1"/>
</dbReference>
<dbReference type="Pfam" id="PF00679">
    <property type="entry name" value="EFG_C"/>
    <property type="match status" value="1"/>
</dbReference>
<dbReference type="Pfam" id="PF00009">
    <property type="entry name" value="GTP_EFTU"/>
    <property type="match status" value="1"/>
</dbReference>
<dbReference type="Pfam" id="PF03144">
    <property type="entry name" value="GTP_EFTU_D2"/>
    <property type="match status" value="1"/>
</dbReference>
<dbReference type="Pfam" id="PF06421">
    <property type="entry name" value="LepA_C"/>
    <property type="match status" value="1"/>
</dbReference>
<dbReference type="PRINTS" id="PR00315">
    <property type="entry name" value="ELONGATNFCT"/>
</dbReference>
<dbReference type="SMART" id="SM00838">
    <property type="entry name" value="EFG_C"/>
    <property type="match status" value="1"/>
</dbReference>
<dbReference type="SUPFAM" id="SSF54980">
    <property type="entry name" value="EF-G C-terminal domain-like"/>
    <property type="match status" value="2"/>
</dbReference>
<dbReference type="SUPFAM" id="SSF52540">
    <property type="entry name" value="P-loop containing nucleoside triphosphate hydrolases"/>
    <property type="match status" value="1"/>
</dbReference>
<dbReference type="PROSITE" id="PS00301">
    <property type="entry name" value="G_TR_1"/>
    <property type="match status" value="1"/>
</dbReference>
<dbReference type="PROSITE" id="PS51722">
    <property type="entry name" value="G_TR_2"/>
    <property type="match status" value="1"/>
</dbReference>
<name>LEPA_BACHK</name>
<comment type="function">
    <text evidence="1">Required for accurate and efficient protein synthesis under certain stress conditions. May act as a fidelity factor of the translation reaction, by catalyzing a one-codon backward translocation of tRNAs on improperly translocated ribosomes. Back-translocation proceeds from a post-translocation (POST) complex to a pre-translocation (PRE) complex, thus giving elongation factor G a second chance to translocate the tRNAs correctly. Binds to ribosomes in a GTP-dependent manner.</text>
</comment>
<comment type="catalytic activity">
    <reaction evidence="1">
        <text>GTP + H2O = GDP + phosphate + H(+)</text>
        <dbReference type="Rhea" id="RHEA:19669"/>
        <dbReference type="ChEBI" id="CHEBI:15377"/>
        <dbReference type="ChEBI" id="CHEBI:15378"/>
        <dbReference type="ChEBI" id="CHEBI:37565"/>
        <dbReference type="ChEBI" id="CHEBI:43474"/>
        <dbReference type="ChEBI" id="CHEBI:58189"/>
        <dbReference type="EC" id="3.6.5.n1"/>
    </reaction>
</comment>
<comment type="subcellular location">
    <subcellularLocation>
        <location evidence="1">Cell membrane</location>
        <topology evidence="1">Peripheral membrane protein</topology>
        <orientation evidence="1">Cytoplasmic side</orientation>
    </subcellularLocation>
</comment>
<comment type="similarity">
    <text evidence="1">Belongs to the TRAFAC class translation factor GTPase superfamily. Classic translation factor GTPase family. LepA subfamily.</text>
</comment>
<feature type="chain" id="PRO_0000176230" description="Elongation factor 4">
    <location>
        <begin position="1"/>
        <end position="607"/>
    </location>
</feature>
<feature type="domain" description="tr-type G">
    <location>
        <begin position="11"/>
        <end position="193"/>
    </location>
</feature>
<feature type="binding site" evidence="1">
    <location>
        <begin position="23"/>
        <end position="28"/>
    </location>
    <ligand>
        <name>GTP</name>
        <dbReference type="ChEBI" id="CHEBI:37565"/>
    </ligand>
</feature>
<feature type="binding site" evidence="1">
    <location>
        <begin position="140"/>
        <end position="143"/>
    </location>
    <ligand>
        <name>GTP</name>
        <dbReference type="ChEBI" id="CHEBI:37565"/>
    </ligand>
</feature>
<accession>Q6HDK2</accession>
<keyword id="KW-1003">Cell membrane</keyword>
<keyword id="KW-0342">GTP-binding</keyword>
<keyword id="KW-0378">Hydrolase</keyword>
<keyword id="KW-0472">Membrane</keyword>
<keyword id="KW-0547">Nucleotide-binding</keyword>
<keyword id="KW-0648">Protein biosynthesis</keyword>
<proteinExistence type="inferred from homology"/>
<reference key="1">
    <citation type="journal article" date="2006" name="J. Bacteriol.">
        <title>Pathogenomic sequence analysis of Bacillus cereus and Bacillus thuringiensis isolates closely related to Bacillus anthracis.</title>
        <authorList>
            <person name="Han C.S."/>
            <person name="Xie G."/>
            <person name="Challacombe J.F."/>
            <person name="Altherr M.R."/>
            <person name="Bhotika S.S."/>
            <person name="Bruce D."/>
            <person name="Campbell C.S."/>
            <person name="Campbell M.L."/>
            <person name="Chen J."/>
            <person name="Chertkov O."/>
            <person name="Cleland C."/>
            <person name="Dimitrijevic M."/>
            <person name="Doggett N.A."/>
            <person name="Fawcett J.J."/>
            <person name="Glavina T."/>
            <person name="Goodwin L.A."/>
            <person name="Hill K.K."/>
            <person name="Hitchcock P."/>
            <person name="Jackson P.J."/>
            <person name="Keim P."/>
            <person name="Kewalramani A.R."/>
            <person name="Longmire J."/>
            <person name="Lucas S."/>
            <person name="Malfatti S."/>
            <person name="McMurry K."/>
            <person name="Meincke L.J."/>
            <person name="Misra M."/>
            <person name="Moseman B.L."/>
            <person name="Mundt M."/>
            <person name="Munk A.C."/>
            <person name="Okinaka R.T."/>
            <person name="Parson-Quintana B."/>
            <person name="Reilly L.P."/>
            <person name="Richardson P."/>
            <person name="Robinson D.L."/>
            <person name="Rubin E."/>
            <person name="Saunders E."/>
            <person name="Tapia R."/>
            <person name="Tesmer J.G."/>
            <person name="Thayer N."/>
            <person name="Thompson L.S."/>
            <person name="Tice H."/>
            <person name="Ticknor L.O."/>
            <person name="Wills P.L."/>
            <person name="Brettin T.S."/>
            <person name="Gilna P."/>
        </authorList>
    </citation>
    <scope>NUCLEOTIDE SEQUENCE [LARGE SCALE GENOMIC DNA]</scope>
    <source>
        <strain>97-27</strain>
    </source>
</reference>
<sequence>MNKEERAKRQSKIRNFSIIAHIDHGKSTLADRILEKTNALTQREMKAQLLDSMDLERERGITIKLNAVQLNYKAKDGEEYILHLIDTPGHVDFTYEVSRSLAACEGAILVVDAAQGIEAQTLANVYLALDNNLEILPVINKIDLPSADPERVRQEVEDVIGLDASEAVLASAKAGIGIEEILEQIVEKVPAPTGDSEEPLQCMIFDSLYDPYRGVIAYIRVVNGTVKVGDKVRMMATGKEFEVTEVGVFTPKTTQRDELTVGDVGFLAASIKNVGDTRVGDTITHAKRPAAEPLAGYRKLNPMVFCGLYPIDSARYNDLRDALEKLELNDSALEFEPETSQALGFGFRCGFLGLLHMEIIQERIEREFKIDLITTAPSVIYKVFLTNGEDMIVDNPSNMPDPQIIDRVEEPFVKAAIMVPNDYVGAVMEICQGKRGTFIDMQYLDETRVTLTYEIPLSEIVYDFFDQLKSNTKGYASFDYELIGYKPSKLVKMDILLNSEQVDALSFIVHRDSAYDRGKVIVEKLKELIPRQQFEVPIQATIGNKVVARSTIKAMRKNVLAKCYGGDISRKRKLLDKQKEGKKRMKSVGSVEVPQEAFMAVLKMDDN</sequence>
<evidence type="ECO:0000255" key="1">
    <source>
        <dbReference type="HAMAP-Rule" id="MF_00071"/>
    </source>
</evidence>
<gene>
    <name evidence="1" type="primary">lepA</name>
    <name type="ordered locus">BT9727_4056</name>
</gene>
<organism>
    <name type="scientific">Bacillus thuringiensis subsp. konkukian (strain 97-27)</name>
    <dbReference type="NCBI Taxonomy" id="281309"/>
    <lineage>
        <taxon>Bacteria</taxon>
        <taxon>Bacillati</taxon>
        <taxon>Bacillota</taxon>
        <taxon>Bacilli</taxon>
        <taxon>Bacillales</taxon>
        <taxon>Bacillaceae</taxon>
        <taxon>Bacillus</taxon>
        <taxon>Bacillus cereus group</taxon>
    </lineage>
</organism>
<protein>
    <recommendedName>
        <fullName evidence="1">Elongation factor 4</fullName>
        <shortName evidence="1">EF-4</shortName>
        <ecNumber evidence="1">3.6.5.n1</ecNumber>
    </recommendedName>
    <alternativeName>
        <fullName evidence="1">Ribosomal back-translocase LepA</fullName>
    </alternativeName>
</protein>